<organism>
    <name type="scientific">Kluyveromyces lactis (strain ATCC 8585 / CBS 2359 / DSM 70799 / NBRC 1267 / NRRL Y-1140 / WM37)</name>
    <name type="common">Yeast</name>
    <name type="synonym">Candida sphaerica</name>
    <dbReference type="NCBI Taxonomy" id="284590"/>
    <lineage>
        <taxon>Eukaryota</taxon>
        <taxon>Fungi</taxon>
        <taxon>Dikarya</taxon>
        <taxon>Ascomycota</taxon>
        <taxon>Saccharomycotina</taxon>
        <taxon>Saccharomycetes</taxon>
        <taxon>Saccharomycetales</taxon>
        <taxon>Saccharomycetaceae</taxon>
        <taxon>Kluyveromyces</taxon>
    </lineage>
</organism>
<keyword id="KW-0472">Membrane</keyword>
<keyword id="KW-0496">Mitochondrion</keyword>
<keyword id="KW-1185">Reference proteome</keyword>
<keyword id="KW-0809">Transit peptide</keyword>
<keyword id="KW-0812">Transmembrane</keyword>
<keyword id="KW-1133">Transmembrane helix</keyword>
<reference key="1">
    <citation type="journal article" date="2004" name="Nature">
        <title>Genome evolution in yeasts.</title>
        <authorList>
            <person name="Dujon B."/>
            <person name="Sherman D."/>
            <person name="Fischer G."/>
            <person name="Durrens P."/>
            <person name="Casaregola S."/>
            <person name="Lafontaine I."/>
            <person name="de Montigny J."/>
            <person name="Marck C."/>
            <person name="Neuveglise C."/>
            <person name="Talla E."/>
            <person name="Goffard N."/>
            <person name="Frangeul L."/>
            <person name="Aigle M."/>
            <person name="Anthouard V."/>
            <person name="Babour A."/>
            <person name="Barbe V."/>
            <person name="Barnay S."/>
            <person name="Blanchin S."/>
            <person name="Beckerich J.-M."/>
            <person name="Beyne E."/>
            <person name="Bleykasten C."/>
            <person name="Boisrame A."/>
            <person name="Boyer J."/>
            <person name="Cattolico L."/>
            <person name="Confanioleri F."/>
            <person name="de Daruvar A."/>
            <person name="Despons L."/>
            <person name="Fabre E."/>
            <person name="Fairhead C."/>
            <person name="Ferry-Dumazet H."/>
            <person name="Groppi A."/>
            <person name="Hantraye F."/>
            <person name="Hennequin C."/>
            <person name="Jauniaux N."/>
            <person name="Joyet P."/>
            <person name="Kachouri R."/>
            <person name="Kerrest A."/>
            <person name="Koszul R."/>
            <person name="Lemaire M."/>
            <person name="Lesur I."/>
            <person name="Ma L."/>
            <person name="Muller H."/>
            <person name="Nicaud J.-M."/>
            <person name="Nikolski M."/>
            <person name="Oztas S."/>
            <person name="Ozier-Kalogeropoulos O."/>
            <person name="Pellenz S."/>
            <person name="Potier S."/>
            <person name="Richard G.-F."/>
            <person name="Straub M.-L."/>
            <person name="Suleau A."/>
            <person name="Swennen D."/>
            <person name="Tekaia F."/>
            <person name="Wesolowski-Louvel M."/>
            <person name="Westhof E."/>
            <person name="Wirth B."/>
            <person name="Zeniou-Meyer M."/>
            <person name="Zivanovic Y."/>
            <person name="Bolotin-Fukuhara M."/>
            <person name="Thierry A."/>
            <person name="Bouchier C."/>
            <person name="Caudron B."/>
            <person name="Scarpelli C."/>
            <person name="Gaillardin C."/>
            <person name="Weissenbach J."/>
            <person name="Wincker P."/>
            <person name="Souciet J.-L."/>
        </authorList>
    </citation>
    <scope>NUCLEOTIDE SEQUENCE [LARGE SCALE GENOMIC DNA]</scope>
    <source>
        <strain>ATCC 8585 / CBS 2359 / DSM 70799 / NBRC 1267 / NRRL Y-1140 / WM37</strain>
    </source>
</reference>
<evidence type="ECO:0000255" key="1"/>
<evidence type="ECO:0000305" key="2"/>
<name>AIM39_KLULA</name>
<protein>
    <recommendedName>
        <fullName>Altered inheritance of mitochondria protein 39, mitochondrial</fullName>
    </recommendedName>
</protein>
<feature type="transit peptide" description="Mitochondrion" evidence="1">
    <location>
        <begin position="1"/>
        <end position="30"/>
    </location>
</feature>
<feature type="chain" id="PRO_0000399844" description="Altered inheritance of mitochondria protein 39, mitochondrial">
    <location>
        <begin position="31"/>
        <end position="340"/>
    </location>
</feature>
<feature type="transmembrane region" description="Helical" evidence="1">
    <location>
        <begin position="86"/>
        <end position="106"/>
    </location>
</feature>
<dbReference type="EMBL" id="CR382122">
    <property type="protein sequence ID" value="CAH02310.1"/>
    <property type="molecule type" value="Genomic_DNA"/>
</dbReference>
<dbReference type="RefSeq" id="XP_451917.1">
    <property type="nucleotide sequence ID" value="XM_451917.1"/>
</dbReference>
<dbReference type="FunCoup" id="Q6CVX2">
    <property type="interactions" value="36"/>
</dbReference>
<dbReference type="PaxDb" id="284590-Q6CVX2"/>
<dbReference type="KEGG" id="kla:KLLA0_B08734g"/>
<dbReference type="eggNOG" id="ENOG502QT12">
    <property type="taxonomic scope" value="Eukaryota"/>
</dbReference>
<dbReference type="HOGENOM" id="CLU_058942_0_0_1"/>
<dbReference type="InParanoid" id="Q6CVX2"/>
<dbReference type="OMA" id="WCEDQDP"/>
<dbReference type="Proteomes" id="UP000000598">
    <property type="component" value="Chromosome B"/>
</dbReference>
<dbReference type="GO" id="GO:0031966">
    <property type="term" value="C:mitochondrial membrane"/>
    <property type="evidence" value="ECO:0007669"/>
    <property type="project" value="UniProtKB-SubCell"/>
</dbReference>
<proteinExistence type="inferred from homology"/>
<comment type="subcellular location">
    <subcellularLocation>
        <location evidence="2">Mitochondrion membrane</location>
        <topology evidence="2">Single-pass membrane protein</topology>
    </subcellularLocation>
</comment>
<comment type="similarity">
    <text evidence="2">Belongs to the AIM39 family.</text>
</comment>
<sequence length="340" mass="39499">MYLARSGVFISRIRVLSILNPRFVLLSRRLNHTDSKHYFTDPKTNEIKKPPTFFQHHDSKVNASADDVAQAIAESVRAHKKRRQKVFFSAMLTGIIGVTLGFSISYKVLYKKQESFIPLVPSRKWHRLSAYDAQRVNIDEMKMLGKMRCLSVLTNHEMIREQFGIPLKTDTGEVPSVKSFEVWCEDQDPGVLGIVVRPIDATRDNDSRYHRTHGWHTIPGLFQWRMGTKPIKIRDKFDSFLKFIGVNTGDLLEVINPDREVGDFKYEYPLRKGDSFDGDDDRAMHIWFFGEIDLSQDAMVVFKGKYHVNVKLEQVDLLKKENDQLIRYVLYKNENDKKNG</sequence>
<accession>Q6CVX2</accession>
<gene>
    <name type="primary">AIM39</name>
    <name type="ordered locus">KLLA0B08734g</name>
</gene>